<gene>
    <name evidence="1" type="primary">engB</name>
    <name type="ordered locus">Ddes_1203</name>
</gene>
<dbReference type="EMBL" id="CP001358">
    <property type="protein sequence ID" value="ACL49107.1"/>
    <property type="molecule type" value="Genomic_DNA"/>
</dbReference>
<dbReference type="SMR" id="B8J030"/>
<dbReference type="STRING" id="525146.Ddes_1203"/>
<dbReference type="KEGG" id="dds:Ddes_1203"/>
<dbReference type="eggNOG" id="COG0218">
    <property type="taxonomic scope" value="Bacteria"/>
</dbReference>
<dbReference type="HOGENOM" id="CLU_033732_3_0_7"/>
<dbReference type="GO" id="GO:0005829">
    <property type="term" value="C:cytosol"/>
    <property type="evidence" value="ECO:0007669"/>
    <property type="project" value="TreeGrafter"/>
</dbReference>
<dbReference type="GO" id="GO:0005525">
    <property type="term" value="F:GTP binding"/>
    <property type="evidence" value="ECO:0007669"/>
    <property type="project" value="UniProtKB-UniRule"/>
</dbReference>
<dbReference type="GO" id="GO:0046872">
    <property type="term" value="F:metal ion binding"/>
    <property type="evidence" value="ECO:0007669"/>
    <property type="project" value="UniProtKB-KW"/>
</dbReference>
<dbReference type="GO" id="GO:0000917">
    <property type="term" value="P:division septum assembly"/>
    <property type="evidence" value="ECO:0007669"/>
    <property type="project" value="UniProtKB-KW"/>
</dbReference>
<dbReference type="CDD" id="cd01876">
    <property type="entry name" value="YihA_EngB"/>
    <property type="match status" value="1"/>
</dbReference>
<dbReference type="Gene3D" id="3.40.50.300">
    <property type="entry name" value="P-loop containing nucleotide triphosphate hydrolases"/>
    <property type="match status" value="1"/>
</dbReference>
<dbReference type="HAMAP" id="MF_00321">
    <property type="entry name" value="GTPase_EngB"/>
    <property type="match status" value="1"/>
</dbReference>
<dbReference type="InterPro" id="IPR030393">
    <property type="entry name" value="G_ENGB_dom"/>
</dbReference>
<dbReference type="InterPro" id="IPR006073">
    <property type="entry name" value="GTP-bd"/>
</dbReference>
<dbReference type="InterPro" id="IPR019987">
    <property type="entry name" value="GTP-bd_ribosome_bio_YsxC"/>
</dbReference>
<dbReference type="InterPro" id="IPR027417">
    <property type="entry name" value="P-loop_NTPase"/>
</dbReference>
<dbReference type="NCBIfam" id="TIGR03598">
    <property type="entry name" value="GTPase_YsxC"/>
    <property type="match status" value="1"/>
</dbReference>
<dbReference type="PANTHER" id="PTHR11649:SF13">
    <property type="entry name" value="ENGB-TYPE G DOMAIN-CONTAINING PROTEIN"/>
    <property type="match status" value="1"/>
</dbReference>
<dbReference type="PANTHER" id="PTHR11649">
    <property type="entry name" value="MSS1/TRME-RELATED GTP-BINDING PROTEIN"/>
    <property type="match status" value="1"/>
</dbReference>
<dbReference type="Pfam" id="PF01926">
    <property type="entry name" value="MMR_HSR1"/>
    <property type="match status" value="1"/>
</dbReference>
<dbReference type="SUPFAM" id="SSF52540">
    <property type="entry name" value="P-loop containing nucleoside triphosphate hydrolases"/>
    <property type="match status" value="1"/>
</dbReference>
<dbReference type="PROSITE" id="PS51706">
    <property type="entry name" value="G_ENGB"/>
    <property type="match status" value="1"/>
</dbReference>
<reference key="1">
    <citation type="submission" date="2009-01" db="EMBL/GenBank/DDBJ databases">
        <title>Complete sequence of Desulfovibrio desulfuricans subsp. desulfuricans str. ATCC 27774.</title>
        <authorList>
            <consortium name="US DOE Joint Genome Institute"/>
            <person name="Lucas S."/>
            <person name="Copeland A."/>
            <person name="Lapidus A."/>
            <person name="Glavina del Rio T."/>
            <person name="Tice H."/>
            <person name="Bruce D."/>
            <person name="Goodwin L."/>
            <person name="Pitluck S."/>
            <person name="Sims D."/>
            <person name="Lu M."/>
            <person name="Kiss H."/>
            <person name="Meineke L."/>
            <person name="Brettin T."/>
            <person name="Detter J.C."/>
            <person name="Han C."/>
            <person name="Larimer F."/>
            <person name="Land M."/>
            <person name="Hauser L."/>
            <person name="Kyrpides N."/>
            <person name="Ovchinnikova G."/>
            <person name="Hazen T.C."/>
        </authorList>
    </citation>
    <scope>NUCLEOTIDE SEQUENCE [LARGE SCALE GENOMIC DNA]</scope>
    <source>
        <strain>ATCC 27774 / DSM 6949 / MB</strain>
    </source>
</reference>
<feature type="chain" id="PRO_1000133052" description="Probable GTP-binding protein EngB">
    <location>
        <begin position="1"/>
        <end position="201"/>
    </location>
</feature>
<feature type="domain" description="EngB-type G" evidence="1">
    <location>
        <begin position="21"/>
        <end position="191"/>
    </location>
</feature>
<feature type="binding site" evidence="1">
    <location>
        <begin position="29"/>
        <end position="36"/>
    </location>
    <ligand>
        <name>GTP</name>
        <dbReference type="ChEBI" id="CHEBI:37565"/>
    </ligand>
</feature>
<feature type="binding site" evidence="1">
    <location>
        <position position="36"/>
    </location>
    <ligand>
        <name>Mg(2+)</name>
        <dbReference type="ChEBI" id="CHEBI:18420"/>
    </ligand>
</feature>
<feature type="binding site" evidence="1">
    <location>
        <begin position="56"/>
        <end position="60"/>
    </location>
    <ligand>
        <name>GTP</name>
        <dbReference type="ChEBI" id="CHEBI:37565"/>
    </ligand>
</feature>
<feature type="binding site" evidence="1">
    <location>
        <position position="58"/>
    </location>
    <ligand>
        <name>Mg(2+)</name>
        <dbReference type="ChEBI" id="CHEBI:18420"/>
    </ligand>
</feature>
<feature type="binding site" evidence="1">
    <location>
        <begin position="75"/>
        <end position="78"/>
    </location>
    <ligand>
        <name>GTP</name>
        <dbReference type="ChEBI" id="CHEBI:37565"/>
    </ligand>
</feature>
<feature type="binding site" evidence="1">
    <location>
        <begin position="142"/>
        <end position="145"/>
    </location>
    <ligand>
        <name>GTP</name>
        <dbReference type="ChEBI" id="CHEBI:37565"/>
    </ligand>
</feature>
<feature type="binding site" evidence="1">
    <location>
        <begin position="168"/>
        <end position="172"/>
    </location>
    <ligand>
        <name>GTP</name>
        <dbReference type="ChEBI" id="CHEBI:37565"/>
    </ligand>
</feature>
<accession>B8J030</accession>
<sequence>MAISLTLESTAYTLDQLTAHPEAQIALAGRSNVGKSSLVNALAGRKKLAKVSSTPGKTRSVNFYLVEPLRFYLVDLPGYGYARASHSEREKWAKLLERYLTECASLKALALLLDCRLPPQQLDLNLASFAQAHGLPLVPILTKADKCNQRERAAKQKEWQNIVGVSPVLTSSSSRLGIDRLWQELARAAGVTIIPSAENAQ</sequence>
<organism>
    <name type="scientific">Desulfovibrio desulfuricans (strain ATCC 27774 / DSM 6949 / MB)</name>
    <dbReference type="NCBI Taxonomy" id="525146"/>
    <lineage>
        <taxon>Bacteria</taxon>
        <taxon>Pseudomonadati</taxon>
        <taxon>Thermodesulfobacteriota</taxon>
        <taxon>Desulfovibrionia</taxon>
        <taxon>Desulfovibrionales</taxon>
        <taxon>Desulfovibrionaceae</taxon>
        <taxon>Desulfovibrio</taxon>
    </lineage>
</organism>
<comment type="function">
    <text evidence="1">Necessary for normal cell division and for the maintenance of normal septation.</text>
</comment>
<comment type="cofactor">
    <cofactor evidence="1">
        <name>Mg(2+)</name>
        <dbReference type="ChEBI" id="CHEBI:18420"/>
    </cofactor>
</comment>
<comment type="similarity">
    <text evidence="1">Belongs to the TRAFAC class TrmE-Era-EngA-EngB-Septin-like GTPase superfamily. EngB GTPase family.</text>
</comment>
<keyword id="KW-0131">Cell cycle</keyword>
<keyword id="KW-0132">Cell division</keyword>
<keyword id="KW-0342">GTP-binding</keyword>
<keyword id="KW-0460">Magnesium</keyword>
<keyword id="KW-0479">Metal-binding</keyword>
<keyword id="KW-0547">Nucleotide-binding</keyword>
<keyword id="KW-0717">Septation</keyword>
<evidence type="ECO:0000255" key="1">
    <source>
        <dbReference type="HAMAP-Rule" id="MF_00321"/>
    </source>
</evidence>
<protein>
    <recommendedName>
        <fullName evidence="1">Probable GTP-binding protein EngB</fullName>
    </recommendedName>
</protein>
<name>ENGB_DESDA</name>
<proteinExistence type="inferred from homology"/>